<gene>
    <name evidence="1" type="primary">rpo3</name>
    <name evidence="1" type="synonym">rpoD</name>
    <name type="ordered locus">M1627_2128</name>
</gene>
<proteinExistence type="inferred from homology"/>
<keyword id="KW-0003">3Fe-4S</keyword>
<keyword id="KW-0963">Cytoplasm</keyword>
<keyword id="KW-0240">DNA-directed RNA polymerase</keyword>
<keyword id="KW-0408">Iron</keyword>
<keyword id="KW-0411">Iron-sulfur</keyword>
<keyword id="KW-0479">Metal-binding</keyword>
<keyword id="KW-0548">Nucleotidyltransferase</keyword>
<keyword id="KW-0804">Transcription</keyword>
<keyword id="KW-0808">Transferase</keyword>
<sequence length="265" mass="30184">MSINLLHKDDKRIDLVFEGYPLEFVNAIRRAAMLYVPVMSIDDVYFIENNSPLYDEILAHRLALIPFTSEEALDTYRWPEECIECTENCEKCYTKIYIEAEALNEPKMLYSKDIKSEDPSIVPISGDIPIVLLGANQKISLEARLRLGYGKEHAKFIPVSLAIVRYYPKVEILGNCEKAATVCPEGVFELKDGKLSVKNELACTLCEECLRYCNGLIRISSIEDKYILELESVGSLKPERILLEAGKSIIRKIEELEKKLVEVIK</sequence>
<dbReference type="EC" id="2.7.7.6" evidence="1"/>
<dbReference type="EMBL" id="CP001401">
    <property type="protein sequence ID" value="ACP55994.1"/>
    <property type="molecule type" value="Genomic_DNA"/>
</dbReference>
<dbReference type="RefSeq" id="WP_012712015.1">
    <property type="nucleotide sequence ID" value="NC_012632.1"/>
</dbReference>
<dbReference type="SMR" id="C3N054"/>
<dbReference type="KEGG" id="sim:M1627_2128"/>
<dbReference type="HOGENOM" id="CLU_038421_3_1_2"/>
<dbReference type="Proteomes" id="UP000002307">
    <property type="component" value="Chromosome"/>
</dbReference>
<dbReference type="GO" id="GO:0005737">
    <property type="term" value="C:cytoplasm"/>
    <property type="evidence" value="ECO:0007669"/>
    <property type="project" value="UniProtKB-SubCell"/>
</dbReference>
<dbReference type="GO" id="GO:0000428">
    <property type="term" value="C:DNA-directed RNA polymerase complex"/>
    <property type="evidence" value="ECO:0007669"/>
    <property type="project" value="UniProtKB-KW"/>
</dbReference>
<dbReference type="GO" id="GO:0051538">
    <property type="term" value="F:3 iron, 4 sulfur cluster binding"/>
    <property type="evidence" value="ECO:0007669"/>
    <property type="project" value="UniProtKB-KW"/>
</dbReference>
<dbReference type="GO" id="GO:0003677">
    <property type="term" value="F:DNA binding"/>
    <property type="evidence" value="ECO:0007669"/>
    <property type="project" value="UniProtKB-UniRule"/>
</dbReference>
<dbReference type="GO" id="GO:0003899">
    <property type="term" value="F:DNA-directed RNA polymerase activity"/>
    <property type="evidence" value="ECO:0007669"/>
    <property type="project" value="UniProtKB-UniRule"/>
</dbReference>
<dbReference type="GO" id="GO:0046872">
    <property type="term" value="F:metal ion binding"/>
    <property type="evidence" value="ECO:0007669"/>
    <property type="project" value="UniProtKB-KW"/>
</dbReference>
<dbReference type="GO" id="GO:0046983">
    <property type="term" value="F:protein dimerization activity"/>
    <property type="evidence" value="ECO:0007669"/>
    <property type="project" value="InterPro"/>
</dbReference>
<dbReference type="GO" id="GO:0006351">
    <property type="term" value="P:DNA-templated transcription"/>
    <property type="evidence" value="ECO:0007669"/>
    <property type="project" value="UniProtKB-UniRule"/>
</dbReference>
<dbReference type="CDD" id="cd07030">
    <property type="entry name" value="RNAP_D"/>
    <property type="match status" value="1"/>
</dbReference>
<dbReference type="Gene3D" id="3.30.70.20">
    <property type="match status" value="1"/>
</dbReference>
<dbReference type="Gene3D" id="2.170.120.12">
    <property type="entry name" value="DNA-directed RNA polymerase, insert domain"/>
    <property type="match status" value="1"/>
</dbReference>
<dbReference type="Gene3D" id="3.30.1360.10">
    <property type="entry name" value="RNA polymerase, RBP11-like subunit"/>
    <property type="match status" value="1"/>
</dbReference>
<dbReference type="HAMAP" id="MF_00320">
    <property type="entry name" value="RNApol_arch_Rpo3"/>
    <property type="match status" value="1"/>
</dbReference>
<dbReference type="InterPro" id="IPR001514">
    <property type="entry name" value="DNA-dir_RNA_pol_30-40kDasu_CS"/>
</dbReference>
<dbReference type="InterPro" id="IPR011262">
    <property type="entry name" value="DNA-dir_RNA_pol_insert"/>
</dbReference>
<dbReference type="InterPro" id="IPR011263">
    <property type="entry name" value="DNA-dir_RNA_pol_RpoA/D/Rpb3"/>
</dbReference>
<dbReference type="InterPro" id="IPR036603">
    <property type="entry name" value="RBP11-like"/>
</dbReference>
<dbReference type="InterPro" id="IPR022842">
    <property type="entry name" value="RNAP_Rpo3/Rpb3/RPAC1"/>
</dbReference>
<dbReference type="InterPro" id="IPR036643">
    <property type="entry name" value="RNApol_insert_sf"/>
</dbReference>
<dbReference type="InterPro" id="IPR050518">
    <property type="entry name" value="Rpo3/RPB3_RNA_Pol_subunit"/>
</dbReference>
<dbReference type="NCBIfam" id="NF001988">
    <property type="entry name" value="PRK00783.1"/>
    <property type="match status" value="1"/>
</dbReference>
<dbReference type="PANTHER" id="PTHR11800">
    <property type="entry name" value="DNA-DIRECTED RNA POLYMERASE"/>
    <property type="match status" value="1"/>
</dbReference>
<dbReference type="PANTHER" id="PTHR11800:SF2">
    <property type="entry name" value="DNA-DIRECTED RNA POLYMERASE II SUBUNIT RPB3"/>
    <property type="match status" value="1"/>
</dbReference>
<dbReference type="Pfam" id="PF01000">
    <property type="entry name" value="RNA_pol_A_bac"/>
    <property type="match status" value="1"/>
</dbReference>
<dbReference type="Pfam" id="PF01193">
    <property type="entry name" value="RNA_pol_L"/>
    <property type="match status" value="1"/>
</dbReference>
<dbReference type="SMART" id="SM00662">
    <property type="entry name" value="RPOLD"/>
    <property type="match status" value="1"/>
</dbReference>
<dbReference type="SUPFAM" id="SSF56553">
    <property type="entry name" value="Insert subdomain of RNA polymerase alpha subunit"/>
    <property type="match status" value="1"/>
</dbReference>
<dbReference type="SUPFAM" id="SSF55257">
    <property type="entry name" value="RBP11-like subunits of RNA polymerase"/>
    <property type="match status" value="1"/>
</dbReference>
<dbReference type="PROSITE" id="PS00446">
    <property type="entry name" value="RNA_POL_D_30KD"/>
    <property type="match status" value="1"/>
</dbReference>
<comment type="function">
    <text evidence="1">DNA-dependent RNA polymerase (RNAP) catalyzes the transcription of DNA into RNA using the four ribonucleoside triphosphates as substrates.</text>
</comment>
<comment type="catalytic activity">
    <reaction evidence="1">
        <text>RNA(n) + a ribonucleoside 5'-triphosphate = RNA(n+1) + diphosphate</text>
        <dbReference type="Rhea" id="RHEA:21248"/>
        <dbReference type="Rhea" id="RHEA-COMP:14527"/>
        <dbReference type="Rhea" id="RHEA-COMP:17342"/>
        <dbReference type="ChEBI" id="CHEBI:33019"/>
        <dbReference type="ChEBI" id="CHEBI:61557"/>
        <dbReference type="ChEBI" id="CHEBI:140395"/>
        <dbReference type="EC" id="2.7.7.6"/>
    </reaction>
</comment>
<comment type="cofactor">
    <cofactor evidence="1">
        <name>[3Fe-4S] cluster</name>
        <dbReference type="ChEBI" id="CHEBI:21137"/>
    </cofactor>
    <text evidence="1">Binds 1 [3Fe-4S] cluster.</text>
</comment>
<comment type="subunit">
    <text evidence="1">Part of the RNA polymerase complex.</text>
</comment>
<comment type="subcellular location">
    <subcellularLocation>
        <location evidence="1">Cytoplasm</location>
    </subcellularLocation>
</comment>
<comment type="similarity">
    <text evidence="1">Belongs to the archaeal Rpo3/eukaryotic RPB3 RNA polymerase subunit family.</text>
</comment>
<comment type="caution">
    <text evidence="2">X-ray crystallography in other archaea shows this protein binds a 3Fe-4S cluster, although a 4Fe-4S cluster has been suggested to be present in this protein.</text>
</comment>
<evidence type="ECO:0000255" key="1">
    <source>
        <dbReference type="HAMAP-Rule" id="MF_00320"/>
    </source>
</evidence>
<evidence type="ECO:0000305" key="2"/>
<protein>
    <recommendedName>
        <fullName evidence="1">DNA-directed RNA polymerase subunit Rpo3</fullName>
        <ecNumber evidence="1">2.7.7.6</ecNumber>
    </recommendedName>
    <alternativeName>
        <fullName evidence="1">DNA-directed RNA polymerase subunit D</fullName>
    </alternativeName>
</protein>
<name>RPO3_SACI3</name>
<organism>
    <name type="scientific">Saccharolobus islandicus (strain M.16.27)</name>
    <name type="common">Sulfolobus islandicus</name>
    <dbReference type="NCBI Taxonomy" id="427318"/>
    <lineage>
        <taxon>Archaea</taxon>
        <taxon>Thermoproteota</taxon>
        <taxon>Thermoprotei</taxon>
        <taxon>Sulfolobales</taxon>
        <taxon>Sulfolobaceae</taxon>
        <taxon>Saccharolobus</taxon>
    </lineage>
</organism>
<accession>C3N054</accession>
<feature type="chain" id="PRO_1000205114" description="DNA-directed RNA polymerase subunit Rpo3">
    <location>
        <begin position="1"/>
        <end position="265"/>
    </location>
</feature>
<feature type="binding site" evidence="1">
    <location>
        <position position="203"/>
    </location>
    <ligand>
        <name>[3Fe-4S] cluster</name>
        <dbReference type="ChEBI" id="CHEBI:21137"/>
    </ligand>
</feature>
<feature type="binding site" evidence="1">
    <location>
        <position position="206"/>
    </location>
    <ligand>
        <name>[3Fe-4S] cluster</name>
        <dbReference type="ChEBI" id="CHEBI:21137"/>
    </ligand>
</feature>
<feature type="binding site" evidence="1">
    <location>
        <position position="209"/>
    </location>
    <ligand>
        <name>[3Fe-4S] cluster</name>
        <dbReference type="ChEBI" id="CHEBI:21137"/>
    </ligand>
</feature>
<reference key="1">
    <citation type="journal article" date="2009" name="Proc. Natl. Acad. Sci. U.S.A.">
        <title>Biogeography of the Sulfolobus islandicus pan-genome.</title>
        <authorList>
            <person name="Reno M.L."/>
            <person name="Held N.L."/>
            <person name="Fields C.J."/>
            <person name="Burke P.V."/>
            <person name="Whitaker R.J."/>
        </authorList>
    </citation>
    <scope>NUCLEOTIDE SEQUENCE [LARGE SCALE GENOMIC DNA]</scope>
    <source>
        <strain>M.16.27</strain>
    </source>
</reference>